<gene>
    <name type="primary">CPLX2</name>
</gene>
<dbReference type="EMBL" id="D50807">
    <property type="protein sequence ID" value="BAA09434.1"/>
    <property type="molecule type" value="mRNA"/>
</dbReference>
<dbReference type="RefSeq" id="NP_776708.1">
    <property type="nucleotide sequence ID" value="NM_174283.2"/>
</dbReference>
<dbReference type="RefSeq" id="XP_005211237.1">
    <property type="nucleotide sequence ID" value="XM_005211180.5"/>
</dbReference>
<dbReference type="RefSeq" id="XP_005211238.1">
    <property type="nucleotide sequence ID" value="XM_005211181.5"/>
</dbReference>
<dbReference type="SMR" id="P84088"/>
<dbReference type="CORUM" id="P84088"/>
<dbReference type="FunCoup" id="P84088">
    <property type="interactions" value="1062"/>
</dbReference>
<dbReference type="STRING" id="9913.ENSBTAP00000069342"/>
<dbReference type="iPTMnet" id="P84088"/>
<dbReference type="PaxDb" id="9913-ENSBTAP00000018256"/>
<dbReference type="GeneID" id="281711"/>
<dbReference type="KEGG" id="bta:281711"/>
<dbReference type="CTD" id="10814"/>
<dbReference type="eggNOG" id="ENOG502RXXI">
    <property type="taxonomic scope" value="Eukaryota"/>
</dbReference>
<dbReference type="HOGENOM" id="CLU_132159_1_0_1"/>
<dbReference type="InParanoid" id="P84088"/>
<dbReference type="TreeFam" id="TF315172"/>
<dbReference type="Proteomes" id="UP000009136">
    <property type="component" value="Unplaced"/>
</dbReference>
<dbReference type="GO" id="GO:0005829">
    <property type="term" value="C:cytosol"/>
    <property type="evidence" value="ECO:0007669"/>
    <property type="project" value="UniProtKB-SubCell"/>
</dbReference>
<dbReference type="GO" id="GO:0005634">
    <property type="term" value="C:nucleus"/>
    <property type="evidence" value="ECO:0007669"/>
    <property type="project" value="UniProtKB-SubCell"/>
</dbReference>
<dbReference type="GO" id="GO:0043204">
    <property type="term" value="C:perikaryon"/>
    <property type="evidence" value="ECO:0007669"/>
    <property type="project" value="UniProtKB-SubCell"/>
</dbReference>
<dbReference type="GO" id="GO:0031201">
    <property type="term" value="C:SNARE complex"/>
    <property type="evidence" value="ECO:0000318"/>
    <property type="project" value="GO_Central"/>
</dbReference>
<dbReference type="GO" id="GO:0043195">
    <property type="term" value="C:terminal bouton"/>
    <property type="evidence" value="ECO:0000318"/>
    <property type="project" value="GO_Central"/>
</dbReference>
<dbReference type="GO" id="GO:0000149">
    <property type="term" value="F:SNARE binding"/>
    <property type="evidence" value="ECO:0000318"/>
    <property type="project" value="GO_Central"/>
</dbReference>
<dbReference type="GO" id="GO:0019905">
    <property type="term" value="F:syntaxin binding"/>
    <property type="evidence" value="ECO:0007669"/>
    <property type="project" value="InterPro"/>
</dbReference>
<dbReference type="GO" id="GO:0043303">
    <property type="term" value="P:mast cell degranulation"/>
    <property type="evidence" value="ECO:0007669"/>
    <property type="project" value="UniProtKB-KW"/>
</dbReference>
<dbReference type="GO" id="GO:0050804">
    <property type="term" value="P:modulation of chemical synaptic transmission"/>
    <property type="evidence" value="ECO:0000318"/>
    <property type="project" value="GO_Central"/>
</dbReference>
<dbReference type="GO" id="GO:0031915">
    <property type="term" value="P:positive regulation of synaptic plasticity"/>
    <property type="evidence" value="ECO:0000250"/>
    <property type="project" value="UniProtKB"/>
</dbReference>
<dbReference type="GO" id="GO:0031630">
    <property type="term" value="P:regulation of synaptic vesicle fusion to presynaptic active zone membrane"/>
    <property type="evidence" value="ECO:0000318"/>
    <property type="project" value="GO_Central"/>
</dbReference>
<dbReference type="GO" id="GO:0016079">
    <property type="term" value="P:synaptic vesicle exocytosis"/>
    <property type="evidence" value="ECO:0000318"/>
    <property type="project" value="GO_Central"/>
</dbReference>
<dbReference type="CDD" id="cd22808">
    <property type="entry name" value="Complexin_NTD_CPLX_I_II"/>
    <property type="match status" value="1"/>
</dbReference>
<dbReference type="FunFam" id="1.20.5.580:FF:000001">
    <property type="entry name" value="Complexin 2"/>
    <property type="match status" value="1"/>
</dbReference>
<dbReference type="Gene3D" id="1.20.5.580">
    <property type="entry name" value="Single Helix bin"/>
    <property type="match status" value="1"/>
</dbReference>
<dbReference type="InterPro" id="IPR008849">
    <property type="entry name" value="Synaphin"/>
</dbReference>
<dbReference type="PANTHER" id="PTHR16705">
    <property type="entry name" value="COMPLEXIN"/>
    <property type="match status" value="1"/>
</dbReference>
<dbReference type="PANTHER" id="PTHR16705:SF9">
    <property type="entry name" value="COMPLEXIN-2"/>
    <property type="match status" value="1"/>
</dbReference>
<dbReference type="Pfam" id="PF05835">
    <property type="entry name" value="Synaphin"/>
    <property type="match status" value="1"/>
</dbReference>
<dbReference type="SUPFAM" id="SSF58038">
    <property type="entry name" value="SNARE fusion complex"/>
    <property type="match status" value="1"/>
</dbReference>
<reference key="1">
    <citation type="journal article" date="1995" name="Biochem. Biophys. Res. Commun.">
        <title>Synaphin: a protein associated with the docking/fusion complex in presynaptic terminals.</title>
        <authorList>
            <person name="Ishizuka T."/>
            <person name="Saisu H."/>
            <person name="Odani S."/>
            <person name="Abe T."/>
        </authorList>
    </citation>
    <scope>NUCLEOTIDE SEQUENCE [MRNA]</scope>
    <scope>PROTEIN SEQUENCE OF 56-76</scope>
    <source>
        <tissue>Brain</tissue>
    </source>
</reference>
<reference key="2">
    <citation type="journal article" date="2002" name="J. Biol. Chem.">
        <title>Complexin regulates the closure of the fusion pore during regulated vesicle exocytosis.</title>
        <authorList>
            <person name="Archer D.A."/>
            <person name="Graham M.E."/>
            <person name="Burgoyne R.D."/>
        </authorList>
    </citation>
    <scope>TISSUE SPECIFICITY</scope>
    <scope>FUNCTION</scope>
</reference>
<reference key="3">
    <citation type="journal article" date="2002" name="J. Biol. Chem.">
        <title>Action of complexin on SNARE complex.</title>
        <authorList>
            <person name="Hu K."/>
            <person name="Carroll J."/>
            <person name="Rickman C."/>
            <person name="Davletov B."/>
        </authorList>
    </citation>
    <scope>SUBUNIT</scope>
    <scope>FUNCTION</scope>
</reference>
<proteinExistence type="evidence at protein level"/>
<feature type="chain" id="PRO_0000144874" description="Complexin-2">
    <location>
        <begin position="1"/>
        <end position="134"/>
    </location>
</feature>
<feature type="region of interest" description="Disordered" evidence="4">
    <location>
        <begin position="1"/>
        <end position="114"/>
    </location>
</feature>
<feature type="region of interest" description="Interaction with the SNARE complex" evidence="1">
    <location>
        <begin position="41"/>
        <end position="97"/>
    </location>
</feature>
<feature type="coiled-coil region" evidence="3">
    <location>
        <begin position="28"/>
        <end position="84"/>
    </location>
</feature>
<feature type="compositionally biased region" description="Basic and acidic residues" evidence="4">
    <location>
        <begin position="15"/>
        <end position="85"/>
    </location>
</feature>
<feature type="modified residue" description="Phosphoserine" evidence="2">
    <location>
        <position position="93"/>
    </location>
</feature>
<comment type="function">
    <text evidence="5 6">Negatively regulates the formation of synaptic vesicle clustering at active zone to the presynaptic membrane in postmitotic neurons. Positively regulates a late step in exocytosis of various cytoplasmic vesicles, such as synaptic vesicles and other secretory vesicles. Also involved in mast cell exocytosis.</text>
</comment>
<comment type="subunit">
    <text evidence="6">Binds to the SNARE core complex containing SNAP25, VAMP2 and STX1A.</text>
</comment>
<comment type="subcellular location">
    <subcellularLocation>
        <location evidence="2">Cytoplasm</location>
        <location evidence="2">Cytosol</location>
    </subcellularLocation>
    <subcellularLocation>
        <location evidence="2">Presynapse</location>
    </subcellularLocation>
    <subcellularLocation>
        <location evidence="2">Nucleus</location>
    </subcellularLocation>
    <subcellularLocation>
        <location evidence="2">Perikaryon</location>
    </subcellularLocation>
    <text evidence="2">Translocated from the perikaryon to the presynaptic terminals during maturation of neuronal cells. In mast cells, cytosol and nucleus. Becomes enriched near plasma membrane following stimulation.</text>
</comment>
<comment type="tissue specificity">
    <text evidence="5">Nervous system. Also present in adrenal chromaffin cells (at protein level).</text>
</comment>
<comment type="similarity">
    <text evidence="8">Belongs to the complexin/synaphin family.</text>
</comment>
<keyword id="KW-0966">Cell projection</keyword>
<keyword id="KW-0175">Coiled coil</keyword>
<keyword id="KW-0963">Cytoplasm</keyword>
<keyword id="KW-0903">Direct protein sequencing</keyword>
<keyword id="KW-0268">Exocytosis</keyword>
<keyword id="KW-0467">Mast cell degranulation</keyword>
<keyword id="KW-0532">Neurotransmitter transport</keyword>
<keyword id="KW-0539">Nucleus</keyword>
<keyword id="KW-0597">Phosphoprotein</keyword>
<keyword id="KW-1185">Reference proteome</keyword>
<keyword id="KW-0770">Synapse</keyword>
<keyword id="KW-0813">Transport</keyword>
<organism>
    <name type="scientific">Bos taurus</name>
    <name type="common">Bovine</name>
    <dbReference type="NCBI Taxonomy" id="9913"/>
    <lineage>
        <taxon>Eukaryota</taxon>
        <taxon>Metazoa</taxon>
        <taxon>Chordata</taxon>
        <taxon>Craniata</taxon>
        <taxon>Vertebrata</taxon>
        <taxon>Euteleostomi</taxon>
        <taxon>Mammalia</taxon>
        <taxon>Eutheria</taxon>
        <taxon>Laurasiatheria</taxon>
        <taxon>Artiodactyla</taxon>
        <taxon>Ruminantia</taxon>
        <taxon>Pecora</taxon>
        <taxon>Bovidae</taxon>
        <taxon>Bovinae</taxon>
        <taxon>Bos</taxon>
    </lineage>
</organism>
<sequence length="134" mass="15394">MDFVMKQALGGATKDMGKMLGGEEEKDPDAQKKEEERQEALRQQEEERKAKHARMEAEREKVRQQIRDKYGLKKKEEKEAEEKAALEQPCEGSLTRPKKAIPAGCGDEEEEEEESILDTVLKYLPGPLQDMFKK</sequence>
<protein>
    <recommendedName>
        <fullName>Complexin-2</fullName>
    </recommendedName>
    <alternativeName>
        <fullName>Complexin II</fullName>
        <shortName>CPX II</shortName>
    </alternativeName>
    <alternativeName>
        <fullName evidence="7">Synaphin-1</fullName>
    </alternativeName>
</protein>
<name>CPLX2_BOVIN</name>
<evidence type="ECO:0000250" key="1"/>
<evidence type="ECO:0000250" key="2">
    <source>
        <dbReference type="UniProtKB" id="P84087"/>
    </source>
</evidence>
<evidence type="ECO:0000255" key="3"/>
<evidence type="ECO:0000256" key="4">
    <source>
        <dbReference type="SAM" id="MobiDB-lite"/>
    </source>
</evidence>
<evidence type="ECO:0000269" key="5">
    <source>
    </source>
</evidence>
<evidence type="ECO:0000269" key="6">
    <source>
    </source>
</evidence>
<evidence type="ECO:0000303" key="7">
    <source>
    </source>
</evidence>
<evidence type="ECO:0000305" key="8"/>
<accession>P84088</accession>
<accession>O09056</accession>
<accession>Q13329</accession>
<accession>Q28184</accession>
<accession>Q64386</accession>